<comment type="catalytic activity">
    <reaction evidence="1">
        <text>2-formamido-N(1)-(5-O-phospho-beta-D-ribosyl)acetamidine + ATP = 5-amino-1-(5-phospho-beta-D-ribosyl)imidazole + ADP + phosphate + H(+)</text>
        <dbReference type="Rhea" id="RHEA:23032"/>
        <dbReference type="ChEBI" id="CHEBI:15378"/>
        <dbReference type="ChEBI" id="CHEBI:30616"/>
        <dbReference type="ChEBI" id="CHEBI:43474"/>
        <dbReference type="ChEBI" id="CHEBI:137981"/>
        <dbReference type="ChEBI" id="CHEBI:147287"/>
        <dbReference type="ChEBI" id="CHEBI:456216"/>
        <dbReference type="EC" id="6.3.3.1"/>
    </reaction>
</comment>
<comment type="pathway">
    <text evidence="1">Purine metabolism; IMP biosynthesis via de novo pathway; 5-amino-1-(5-phospho-D-ribosyl)imidazole from N(2)-formyl-N(1)-(5-phospho-D-ribosyl)glycinamide: step 2/2.</text>
</comment>
<comment type="subcellular location">
    <subcellularLocation>
        <location evidence="1">Cytoplasm</location>
    </subcellularLocation>
</comment>
<comment type="similarity">
    <text evidence="1">Belongs to the AIR synthase family.</text>
</comment>
<sequence>MSRYQEAGVDIHAGYELVNKIKKDVKSTRRVGTTGNIGSFGGTFDLSVLNIKEPVLVSGTDGVGTKLLIAQKMDKHDTIGIDCVAMCVNDILAQGAEPLYFLDYIATGKNDPDKIAQIVAGVAEGCRQAGTALIGGETAEMPDMYAKDEYDLAGFSSGVVEKSKLLTDANPQENDILIGLASSGIHSNGFSLVRQILFKDNKIDLSEKREEFGGKTIGEVILEPTRIYIDSVLPLVKENLVNGIAHITGGGLIENLPRMFADDLTAEIDASSWKVLPIFEYLKKLGNLSQDDCYETFNMGIGMVLAVSEDKLESVKKLLSDKDEDFYIIGNLRKRKGNEEKIIVH</sequence>
<reference key="1">
    <citation type="journal article" date="2006" name="Proc. Natl. Acad. Sci. U.S.A.">
        <title>Multireplicon genome architecture of Lactobacillus salivarius.</title>
        <authorList>
            <person name="Claesson M.J."/>
            <person name="Li Y."/>
            <person name="Leahy S."/>
            <person name="Canchaya C."/>
            <person name="van Pijkeren J.P."/>
            <person name="Cerdeno-Tarraga A.M."/>
            <person name="Parkhill J."/>
            <person name="Flynn S."/>
            <person name="O'Sullivan G.C."/>
            <person name="Collins J.K."/>
            <person name="Higgins D."/>
            <person name="Shanahan F."/>
            <person name="Fitzgerald G.F."/>
            <person name="van Sinderen D."/>
            <person name="O'Toole P.W."/>
        </authorList>
    </citation>
    <scope>NUCLEOTIDE SEQUENCE [LARGE SCALE GENOMIC DNA]</scope>
    <source>
        <strain>UCC118</strain>
    </source>
</reference>
<evidence type="ECO:0000255" key="1">
    <source>
        <dbReference type="HAMAP-Rule" id="MF_00741"/>
    </source>
</evidence>
<accession>Q1WU57</accession>
<protein>
    <recommendedName>
        <fullName evidence="1">Phosphoribosylformylglycinamidine cyclo-ligase</fullName>
        <ecNumber evidence="1">6.3.3.1</ecNumber>
    </recommendedName>
    <alternativeName>
        <fullName evidence="1">AIR synthase</fullName>
    </alternativeName>
    <alternativeName>
        <fullName evidence="1">AIRS</fullName>
    </alternativeName>
    <alternativeName>
        <fullName evidence="1">Phosphoribosyl-aminoimidazole synthetase</fullName>
    </alternativeName>
</protein>
<feature type="chain" id="PRO_0000258365" description="Phosphoribosylformylglycinamidine cyclo-ligase">
    <location>
        <begin position="1"/>
        <end position="345"/>
    </location>
</feature>
<proteinExistence type="inferred from homology"/>
<keyword id="KW-0067">ATP-binding</keyword>
<keyword id="KW-0963">Cytoplasm</keyword>
<keyword id="KW-0436">Ligase</keyword>
<keyword id="KW-0547">Nucleotide-binding</keyword>
<keyword id="KW-0658">Purine biosynthesis</keyword>
<keyword id="KW-1185">Reference proteome</keyword>
<gene>
    <name evidence="1" type="primary">purM</name>
    <name type="ordered locus">LSL_0668</name>
</gene>
<name>PUR5_LIGS1</name>
<dbReference type="EC" id="6.3.3.1" evidence="1"/>
<dbReference type="EMBL" id="CP000233">
    <property type="protein sequence ID" value="ABD99478.1"/>
    <property type="molecule type" value="Genomic_DNA"/>
</dbReference>
<dbReference type="RefSeq" id="WP_003700044.1">
    <property type="nucleotide sequence ID" value="NC_007929.1"/>
</dbReference>
<dbReference type="RefSeq" id="YP_535561.1">
    <property type="nucleotide sequence ID" value="NC_007929.1"/>
</dbReference>
<dbReference type="SMR" id="Q1WU57"/>
<dbReference type="STRING" id="362948.LSL_0668"/>
<dbReference type="KEGG" id="lsl:LSL_0668"/>
<dbReference type="PATRIC" id="fig|362948.14.peg.748"/>
<dbReference type="HOGENOM" id="CLU_047116_0_0_9"/>
<dbReference type="OrthoDB" id="9802507at2"/>
<dbReference type="UniPathway" id="UPA00074">
    <property type="reaction ID" value="UER00129"/>
</dbReference>
<dbReference type="Proteomes" id="UP000006559">
    <property type="component" value="Chromosome"/>
</dbReference>
<dbReference type="GO" id="GO:0005829">
    <property type="term" value="C:cytosol"/>
    <property type="evidence" value="ECO:0007669"/>
    <property type="project" value="TreeGrafter"/>
</dbReference>
<dbReference type="GO" id="GO:0005524">
    <property type="term" value="F:ATP binding"/>
    <property type="evidence" value="ECO:0007669"/>
    <property type="project" value="UniProtKB-KW"/>
</dbReference>
<dbReference type="GO" id="GO:0004637">
    <property type="term" value="F:phosphoribosylamine-glycine ligase activity"/>
    <property type="evidence" value="ECO:0007669"/>
    <property type="project" value="TreeGrafter"/>
</dbReference>
<dbReference type="GO" id="GO:0004641">
    <property type="term" value="F:phosphoribosylformylglycinamidine cyclo-ligase activity"/>
    <property type="evidence" value="ECO:0007669"/>
    <property type="project" value="UniProtKB-UniRule"/>
</dbReference>
<dbReference type="GO" id="GO:0006189">
    <property type="term" value="P:'de novo' IMP biosynthetic process"/>
    <property type="evidence" value="ECO:0007669"/>
    <property type="project" value="UniProtKB-UniRule"/>
</dbReference>
<dbReference type="GO" id="GO:0046084">
    <property type="term" value="P:adenine biosynthetic process"/>
    <property type="evidence" value="ECO:0007669"/>
    <property type="project" value="TreeGrafter"/>
</dbReference>
<dbReference type="CDD" id="cd02196">
    <property type="entry name" value="PurM"/>
    <property type="match status" value="1"/>
</dbReference>
<dbReference type="FunFam" id="3.30.1330.10:FF:000001">
    <property type="entry name" value="Phosphoribosylformylglycinamidine cyclo-ligase"/>
    <property type="match status" value="1"/>
</dbReference>
<dbReference type="FunFam" id="3.90.650.10:FF:000011">
    <property type="entry name" value="Phosphoribosylformylglycinamidine cyclo-ligase"/>
    <property type="match status" value="1"/>
</dbReference>
<dbReference type="Gene3D" id="3.90.650.10">
    <property type="entry name" value="PurM-like C-terminal domain"/>
    <property type="match status" value="1"/>
</dbReference>
<dbReference type="Gene3D" id="3.30.1330.10">
    <property type="entry name" value="PurM-like, N-terminal domain"/>
    <property type="match status" value="1"/>
</dbReference>
<dbReference type="HAMAP" id="MF_00741">
    <property type="entry name" value="AIRS"/>
    <property type="match status" value="1"/>
</dbReference>
<dbReference type="InterPro" id="IPR010918">
    <property type="entry name" value="PurM-like_C_dom"/>
</dbReference>
<dbReference type="InterPro" id="IPR036676">
    <property type="entry name" value="PurM-like_C_sf"/>
</dbReference>
<dbReference type="InterPro" id="IPR016188">
    <property type="entry name" value="PurM-like_N"/>
</dbReference>
<dbReference type="InterPro" id="IPR036921">
    <property type="entry name" value="PurM-like_N_sf"/>
</dbReference>
<dbReference type="InterPro" id="IPR004733">
    <property type="entry name" value="PurM_cligase"/>
</dbReference>
<dbReference type="NCBIfam" id="TIGR00878">
    <property type="entry name" value="purM"/>
    <property type="match status" value="1"/>
</dbReference>
<dbReference type="PANTHER" id="PTHR10520:SF12">
    <property type="entry name" value="TRIFUNCTIONAL PURINE BIOSYNTHETIC PROTEIN ADENOSINE-3"/>
    <property type="match status" value="1"/>
</dbReference>
<dbReference type="PANTHER" id="PTHR10520">
    <property type="entry name" value="TRIFUNCTIONAL PURINE BIOSYNTHETIC PROTEIN ADENOSINE-3-RELATED"/>
    <property type="match status" value="1"/>
</dbReference>
<dbReference type="Pfam" id="PF00586">
    <property type="entry name" value="AIRS"/>
    <property type="match status" value="1"/>
</dbReference>
<dbReference type="Pfam" id="PF02769">
    <property type="entry name" value="AIRS_C"/>
    <property type="match status" value="1"/>
</dbReference>
<dbReference type="SUPFAM" id="SSF56042">
    <property type="entry name" value="PurM C-terminal domain-like"/>
    <property type="match status" value="1"/>
</dbReference>
<dbReference type="SUPFAM" id="SSF55326">
    <property type="entry name" value="PurM N-terminal domain-like"/>
    <property type="match status" value="1"/>
</dbReference>
<organism>
    <name type="scientific">Ligilactobacillus salivarius (strain UCC118)</name>
    <name type="common">Lactobacillus salivarius</name>
    <dbReference type="NCBI Taxonomy" id="362948"/>
    <lineage>
        <taxon>Bacteria</taxon>
        <taxon>Bacillati</taxon>
        <taxon>Bacillota</taxon>
        <taxon>Bacilli</taxon>
        <taxon>Lactobacillales</taxon>
        <taxon>Lactobacillaceae</taxon>
        <taxon>Ligilactobacillus</taxon>
    </lineage>
</organism>